<feature type="chain" id="PRO_0000130023" description="Small ribosomal subunit protein uS19m">
    <location>
        <begin position="1"/>
        <end position="78"/>
    </location>
</feature>
<protein>
    <recommendedName>
        <fullName evidence="1">Small ribosomal subunit protein uS19m</fullName>
    </recommendedName>
    <alternativeName>
        <fullName>Ribosomal protein S19, mitochondrial</fullName>
    </alternativeName>
</protein>
<proteinExistence type="inferred from homology"/>
<accession>P46762</accession>
<sequence length="78" mass="8980">MRSVWKGCFYKNNNNGLSKSSTVINTMLKKKFTLHDGKSYKSILIDRSMVGLKIGEFVFTRKMGVLHKKKVLKKKGKK</sequence>
<organism>
    <name type="scientific">Acanthamoeba castellanii</name>
    <name type="common">Amoeba</name>
    <dbReference type="NCBI Taxonomy" id="5755"/>
    <lineage>
        <taxon>Eukaryota</taxon>
        <taxon>Amoebozoa</taxon>
        <taxon>Discosea</taxon>
        <taxon>Longamoebia</taxon>
        <taxon>Centramoebida</taxon>
        <taxon>Acanthamoebidae</taxon>
        <taxon>Acanthamoeba</taxon>
    </lineage>
</organism>
<name>RT19_ACACA</name>
<keyword id="KW-0496">Mitochondrion</keyword>
<keyword id="KW-0687">Ribonucleoprotein</keyword>
<keyword id="KW-0689">Ribosomal protein</keyword>
<reference key="1">
    <citation type="journal article" date="1995" name="J. Mol. Biol.">
        <title>The mitochondrial DNA of the amoeboid protozoon, Acanthamoeba castellanii: complete sequence, gene content and genome organization.</title>
        <authorList>
            <person name="Burger G."/>
            <person name="Plante I."/>
            <person name="Lonergan K.M."/>
            <person name="Gray M.W."/>
        </authorList>
    </citation>
    <scope>NUCLEOTIDE SEQUENCE [GENOMIC DNA]</scope>
    <source>
        <strain>ATCC 30010 / Neff</strain>
    </source>
</reference>
<comment type="subcellular location">
    <subcellularLocation>
        <location>Mitochondrion</location>
    </subcellularLocation>
</comment>
<comment type="similarity">
    <text evidence="1">Belongs to the universal ribosomal protein uS19 family.</text>
</comment>
<geneLocation type="mitochondrion"/>
<dbReference type="EMBL" id="U12386">
    <property type="protein sequence ID" value="AAD11840.1"/>
    <property type="molecule type" value="Genomic_DNA"/>
</dbReference>
<dbReference type="PIR" id="S53848">
    <property type="entry name" value="S53848"/>
</dbReference>
<dbReference type="RefSeq" id="NP_042547.1">
    <property type="nucleotide sequence ID" value="NC_001637.1"/>
</dbReference>
<dbReference type="SMR" id="P46762"/>
<dbReference type="GeneID" id="1734044"/>
<dbReference type="GO" id="GO:0005739">
    <property type="term" value="C:mitochondrion"/>
    <property type="evidence" value="ECO:0007669"/>
    <property type="project" value="UniProtKB-SubCell"/>
</dbReference>
<dbReference type="GO" id="GO:1990904">
    <property type="term" value="C:ribonucleoprotein complex"/>
    <property type="evidence" value="ECO:0007669"/>
    <property type="project" value="UniProtKB-KW"/>
</dbReference>
<dbReference type="GO" id="GO:0005840">
    <property type="term" value="C:ribosome"/>
    <property type="evidence" value="ECO:0007669"/>
    <property type="project" value="UniProtKB-KW"/>
</dbReference>
<dbReference type="GO" id="GO:0003723">
    <property type="term" value="F:RNA binding"/>
    <property type="evidence" value="ECO:0007669"/>
    <property type="project" value="InterPro"/>
</dbReference>
<dbReference type="GO" id="GO:0003735">
    <property type="term" value="F:structural constituent of ribosome"/>
    <property type="evidence" value="ECO:0007669"/>
    <property type="project" value="InterPro"/>
</dbReference>
<dbReference type="GO" id="GO:0006412">
    <property type="term" value="P:translation"/>
    <property type="evidence" value="ECO:0007669"/>
    <property type="project" value="InterPro"/>
</dbReference>
<dbReference type="Gene3D" id="3.30.860.10">
    <property type="entry name" value="30s Ribosomal Protein S19, Chain A"/>
    <property type="match status" value="1"/>
</dbReference>
<dbReference type="HAMAP" id="MF_00531">
    <property type="entry name" value="Ribosomal_uS19"/>
    <property type="match status" value="1"/>
</dbReference>
<dbReference type="InterPro" id="IPR002222">
    <property type="entry name" value="Ribosomal_uS19"/>
</dbReference>
<dbReference type="InterPro" id="IPR020934">
    <property type="entry name" value="Ribosomal_uS19_CS"/>
</dbReference>
<dbReference type="InterPro" id="IPR023575">
    <property type="entry name" value="Ribosomal_uS19_SF"/>
</dbReference>
<dbReference type="Pfam" id="PF00203">
    <property type="entry name" value="Ribosomal_S19"/>
    <property type="match status" value="1"/>
</dbReference>
<dbReference type="PIRSF" id="PIRSF002144">
    <property type="entry name" value="Ribosomal_S19"/>
    <property type="match status" value="1"/>
</dbReference>
<dbReference type="PRINTS" id="PR00975">
    <property type="entry name" value="RIBOSOMALS19"/>
</dbReference>
<dbReference type="SUPFAM" id="SSF54570">
    <property type="entry name" value="Ribosomal protein S19"/>
    <property type="match status" value="1"/>
</dbReference>
<dbReference type="PROSITE" id="PS00323">
    <property type="entry name" value="RIBOSOMAL_S19"/>
    <property type="match status" value="1"/>
</dbReference>
<gene>
    <name type="primary">RPS19</name>
</gene>
<evidence type="ECO:0000305" key="1"/>